<organism>
    <name type="scientific">Enterobacteria phage T4</name>
    <name type="common">Bacteriophage T4</name>
    <dbReference type="NCBI Taxonomy" id="10665"/>
    <lineage>
        <taxon>Viruses</taxon>
        <taxon>Duplodnaviria</taxon>
        <taxon>Heunggongvirae</taxon>
        <taxon>Uroviricota</taxon>
        <taxon>Caudoviricetes</taxon>
        <taxon>Straboviridae</taxon>
        <taxon>Tevenvirinae</taxon>
        <taxon>Tequatrovirus</taxon>
    </lineage>
</organism>
<accession>P39259</accession>
<accession>Q96220</accession>
<keyword id="KW-1185">Reference proteome</keyword>
<proteinExistence type="predicted"/>
<gene>
    <name type="primary">y05D</name>
    <name type="synonym">nrdC.8</name>
</gene>
<sequence>MNAKDIFNLVNYNDGKFKSEAQSKFFNDISIGGEITVNGGQIYKSRWNWIVIIDEIGIVEIYKNTNKNRTLHWSRDTNEQYKKDKASKLSRVTQEDIEFIKKDILMYDNLIAEEQAVIDKFDEIKASREIPDFMKESVNERYTLISERIETYKKQRAERQNTLRKFEERLNTVLA</sequence>
<dbReference type="EMBL" id="U76612">
    <property type="protein sequence ID" value="AAB26974.1"/>
    <property type="molecule type" value="Genomic_DNA"/>
</dbReference>
<dbReference type="EMBL" id="AF158101">
    <property type="protein sequence ID" value="AAD42639.1"/>
    <property type="molecule type" value="Genomic_DNA"/>
</dbReference>
<dbReference type="RefSeq" id="NP_049706.1">
    <property type="nucleotide sequence ID" value="NC_000866.4"/>
</dbReference>
<dbReference type="SMR" id="P39259"/>
<dbReference type="GeneID" id="1258541"/>
<dbReference type="KEGG" id="vg:1258541"/>
<dbReference type="OrthoDB" id="11295at10239"/>
<dbReference type="Proteomes" id="UP000009087">
    <property type="component" value="Segment"/>
</dbReference>
<protein>
    <recommendedName>
        <fullName>Uncharacterized 20.7 kDa protein in nrdC-mobD intergenic region</fullName>
    </recommendedName>
</protein>
<feature type="chain" id="PRO_0000165122" description="Uncharacterized 20.7 kDa protein in nrdC-mobD intergenic region">
    <location>
        <begin position="1"/>
        <end position="175"/>
    </location>
</feature>
<name>Y05D_BPT4</name>
<organismHost>
    <name type="scientific">Escherichia coli</name>
    <dbReference type="NCBI Taxonomy" id="562"/>
</organismHost>
<reference key="1">
    <citation type="submission" date="1996-11" db="EMBL/GenBank/DDBJ databases">
        <title>The 10.7 kb 'nonessential' region of bacteriophage T4 between the genes tk and nrdC: twenty new t4 genes, generally conserved among T-even phages.</title>
        <authorList>
            <person name="Mzhavia N."/>
            <person name="Marusich E."/>
            <person name="Djavakhishvili T."/>
            <person name="Neitzel J."/>
            <person name="Peterson S."/>
            <person name="Awaya M."/>
            <person name="Eidermiller J."/>
            <person name="Canada D."/>
            <person name="Tracy J."/>
            <person name="Gailbreath K."/>
            <person name="Paddison P."/>
            <person name="Anderson B."/>
            <person name="Stidham T."/>
            <person name="Blattner F."/>
            <person name="Kutter E.M."/>
        </authorList>
    </citation>
    <scope>NUCLEOTIDE SEQUENCE [GENOMIC DNA]</scope>
</reference>
<reference key="2">
    <citation type="journal article" date="2003" name="Microbiol. Mol. Biol. Rev.">
        <title>Bacteriophage T4 genome.</title>
        <authorList>
            <person name="Miller E.S."/>
            <person name="Kutter E."/>
            <person name="Mosig G."/>
            <person name="Arisaka F."/>
            <person name="Kunisawa T."/>
            <person name="Ruger W."/>
        </authorList>
    </citation>
    <scope>NUCLEOTIDE SEQUENCE [LARGE SCALE GENOMIC DNA]</scope>
</reference>